<feature type="chain" id="PRO_0000345184" description="Probable ubiquitin-conjugating enzyme E2 18">
    <location>
        <begin position="1"/>
        <end position="161"/>
    </location>
</feature>
<feature type="domain" description="UBC core" evidence="2">
    <location>
        <begin position="15"/>
        <end position="161"/>
    </location>
</feature>
<feature type="active site" description="Glycyl thioester intermediate" evidence="2 3">
    <location>
        <position position="99"/>
    </location>
</feature>
<gene>
    <name type="primary">UBC18</name>
    <name type="ordered locus">At5g42990</name>
    <name type="ORF">MBD2.19</name>
</gene>
<name>UBC18_ARATH</name>
<evidence type="ECO:0000250" key="1">
    <source>
        <dbReference type="UniProtKB" id="P42743"/>
    </source>
</evidence>
<evidence type="ECO:0000255" key="2">
    <source>
        <dbReference type="PROSITE-ProRule" id="PRU00388"/>
    </source>
</evidence>
<evidence type="ECO:0000255" key="3">
    <source>
        <dbReference type="PROSITE-ProRule" id="PRU10133"/>
    </source>
</evidence>
<keyword id="KW-0067">ATP-binding</keyword>
<keyword id="KW-0547">Nucleotide-binding</keyword>
<keyword id="KW-1185">Reference proteome</keyword>
<keyword id="KW-0808">Transferase</keyword>
<keyword id="KW-0833">Ubl conjugation pathway</keyword>
<sequence>MTSSSSPSRKALSKIACNRLQKELSEWQVNPPTGFKHRVTDNLQKWVIEVTGAPGTLYANETYNLQVEFPQHYPMEAPQVIFVPPAPLHPHIYSNGHICLDILYDSWSPAMTVSSVCISILSMLSSSPEKQRPTDNDRYVKNCKNGRSPKETRWWFHDDKV</sequence>
<organism>
    <name type="scientific">Arabidopsis thaliana</name>
    <name type="common">Mouse-ear cress</name>
    <dbReference type="NCBI Taxonomy" id="3702"/>
    <lineage>
        <taxon>Eukaryota</taxon>
        <taxon>Viridiplantae</taxon>
        <taxon>Streptophyta</taxon>
        <taxon>Embryophyta</taxon>
        <taxon>Tracheophyta</taxon>
        <taxon>Spermatophyta</taxon>
        <taxon>Magnoliopsida</taxon>
        <taxon>eudicotyledons</taxon>
        <taxon>Gunneridae</taxon>
        <taxon>Pentapetalae</taxon>
        <taxon>rosids</taxon>
        <taxon>malvids</taxon>
        <taxon>Brassicales</taxon>
        <taxon>Brassicaceae</taxon>
        <taxon>Camelineae</taxon>
        <taxon>Arabidopsis</taxon>
    </lineage>
</organism>
<reference key="1">
    <citation type="journal article" date="2005" name="Plant Physiol.">
        <title>Genome analysis and functional characterization of the E2 and RING-type E3 ligase ubiquitination enzymes of Arabidopsis.</title>
        <authorList>
            <person name="Kraft E."/>
            <person name="Stone S.L."/>
            <person name="Ma L."/>
            <person name="Su N."/>
            <person name="Gao Y."/>
            <person name="Lau O.-S."/>
            <person name="Deng X.-W."/>
            <person name="Callis J."/>
        </authorList>
    </citation>
    <scope>NUCLEOTIDE SEQUENCE [MRNA]</scope>
    <scope>GENE FAMILY</scope>
    <scope>NOMENCLATURE</scope>
</reference>
<reference key="2">
    <citation type="journal article" date="1997" name="DNA Res.">
        <title>Structural analysis of Arabidopsis thaliana chromosome 5. III. Sequence features of the regions of 1,191,918 bp covered by seventeen physically assigned P1 clones.</title>
        <authorList>
            <person name="Nakamura Y."/>
            <person name="Sato S."/>
            <person name="Kaneko T."/>
            <person name="Kotani H."/>
            <person name="Asamizu E."/>
            <person name="Miyajima N."/>
            <person name="Tabata S."/>
        </authorList>
    </citation>
    <scope>NUCLEOTIDE SEQUENCE [LARGE SCALE GENOMIC DNA]</scope>
    <source>
        <strain>cv. Columbia</strain>
    </source>
</reference>
<reference key="3">
    <citation type="journal article" date="2017" name="Plant J.">
        <title>Araport11: a complete reannotation of the Arabidopsis thaliana reference genome.</title>
        <authorList>
            <person name="Cheng C.Y."/>
            <person name="Krishnakumar V."/>
            <person name="Chan A.P."/>
            <person name="Thibaud-Nissen F."/>
            <person name="Schobel S."/>
            <person name="Town C.D."/>
        </authorList>
    </citation>
    <scope>GENOME REANNOTATION</scope>
    <source>
        <strain>cv. Columbia</strain>
    </source>
</reference>
<reference key="4">
    <citation type="journal article" date="2003" name="Science">
        <title>Empirical analysis of transcriptional activity in the Arabidopsis genome.</title>
        <authorList>
            <person name="Yamada K."/>
            <person name="Lim J."/>
            <person name="Dale J.M."/>
            <person name="Chen H."/>
            <person name="Shinn P."/>
            <person name="Palm C.J."/>
            <person name="Southwick A.M."/>
            <person name="Wu H.C."/>
            <person name="Kim C.J."/>
            <person name="Nguyen M."/>
            <person name="Pham P.K."/>
            <person name="Cheuk R.F."/>
            <person name="Karlin-Newmann G."/>
            <person name="Liu S.X."/>
            <person name="Lam B."/>
            <person name="Sakano H."/>
            <person name="Wu T."/>
            <person name="Yu G."/>
            <person name="Miranda M."/>
            <person name="Quach H.L."/>
            <person name="Tripp M."/>
            <person name="Chang C.H."/>
            <person name="Lee J.M."/>
            <person name="Toriumi M.J."/>
            <person name="Chan M.M."/>
            <person name="Tang C.C."/>
            <person name="Onodera C.S."/>
            <person name="Deng J.M."/>
            <person name="Akiyama K."/>
            <person name="Ansari Y."/>
            <person name="Arakawa T."/>
            <person name="Banh J."/>
            <person name="Banno F."/>
            <person name="Bowser L."/>
            <person name="Brooks S.Y."/>
            <person name="Carninci P."/>
            <person name="Chao Q."/>
            <person name="Choy N."/>
            <person name="Enju A."/>
            <person name="Goldsmith A.D."/>
            <person name="Gurjal M."/>
            <person name="Hansen N.F."/>
            <person name="Hayashizaki Y."/>
            <person name="Johnson-Hopson C."/>
            <person name="Hsuan V.W."/>
            <person name="Iida K."/>
            <person name="Karnes M."/>
            <person name="Khan S."/>
            <person name="Koesema E."/>
            <person name="Ishida J."/>
            <person name="Jiang P.X."/>
            <person name="Jones T."/>
            <person name="Kawai J."/>
            <person name="Kamiya A."/>
            <person name="Meyers C."/>
            <person name="Nakajima M."/>
            <person name="Narusaka M."/>
            <person name="Seki M."/>
            <person name="Sakurai T."/>
            <person name="Satou M."/>
            <person name="Tamse R."/>
            <person name="Vaysberg M."/>
            <person name="Wallender E.K."/>
            <person name="Wong C."/>
            <person name="Yamamura Y."/>
            <person name="Yuan S."/>
            <person name="Shinozaki K."/>
            <person name="Davis R.W."/>
            <person name="Theologis A."/>
            <person name="Ecker J.R."/>
        </authorList>
    </citation>
    <scope>NUCLEOTIDE SEQUENCE [LARGE SCALE MRNA]</scope>
    <source>
        <strain>cv. Columbia</strain>
    </source>
</reference>
<reference key="5">
    <citation type="online journal article" date="1997" name="Plant Gene Register">
        <title>A new family of ubiquitin-conjugating enzymes (E2S) AtUBC15/16/17/18 in Arabidopsis thaliana.</title>
        <authorList>
            <person name="Yan N."/>
            <person name="Doelling J."/>
            <person name="Vierstra R.D."/>
        </authorList>
        <locator>PGR97-174</locator>
    </citation>
    <scope>NUCLEOTIDE SEQUENCE [GENOMIC DNA] OF 65-161</scope>
    <source>
        <strain>cv. Columbia</strain>
    </source>
</reference>
<protein>
    <recommendedName>
        <fullName>Probable ubiquitin-conjugating enzyme E2 18</fullName>
        <ecNumber>2.3.2.23</ecNumber>
    </recommendedName>
    <alternativeName>
        <fullName>E2 ubiquitin-conjugating enzyme 18</fullName>
    </alternativeName>
    <alternativeName>
        <fullName>Ubiquitin carrier protein 18</fullName>
    </alternativeName>
</protein>
<comment type="function">
    <text evidence="1">Accepts the ubiquitin from the E1 complex and catalyzes its covalent attachment to other proteins.</text>
</comment>
<comment type="catalytic activity">
    <reaction evidence="2 3">
        <text>S-ubiquitinyl-[E1 ubiquitin-activating enzyme]-L-cysteine + [E2 ubiquitin-conjugating enzyme]-L-cysteine = [E1 ubiquitin-activating enzyme]-L-cysteine + S-ubiquitinyl-[E2 ubiquitin-conjugating enzyme]-L-cysteine.</text>
        <dbReference type="EC" id="2.3.2.23"/>
    </reaction>
</comment>
<comment type="pathway">
    <text evidence="2">Protein modification; protein ubiquitination.</text>
</comment>
<comment type="similarity">
    <text evidence="2">Belongs to the ubiquitin-conjugating enzyme family.</text>
</comment>
<dbReference type="EC" id="2.3.2.23"/>
<dbReference type="EMBL" id="DQ027032">
    <property type="protein sequence ID" value="AAY44858.1"/>
    <property type="molecule type" value="mRNA"/>
</dbReference>
<dbReference type="EMBL" id="AB008264">
    <property type="protein sequence ID" value="BAB09201.1"/>
    <property type="molecule type" value="Genomic_DNA"/>
</dbReference>
<dbReference type="EMBL" id="CP002688">
    <property type="protein sequence ID" value="AED94898.1"/>
    <property type="molecule type" value="Genomic_DNA"/>
</dbReference>
<dbReference type="EMBL" id="AY058137">
    <property type="protein sequence ID" value="AAL25553.1"/>
    <property type="molecule type" value="mRNA"/>
</dbReference>
<dbReference type="EMBL" id="AY101537">
    <property type="protein sequence ID" value="AAM26658.1"/>
    <property type="molecule type" value="mRNA"/>
</dbReference>
<dbReference type="EMBL" id="AF028341">
    <property type="protein sequence ID" value="AAC39327.1"/>
    <property type="molecule type" value="mRNA"/>
</dbReference>
<dbReference type="PIR" id="T52052">
    <property type="entry name" value="T52052"/>
</dbReference>
<dbReference type="RefSeq" id="NP_568619.1">
    <property type="nucleotide sequence ID" value="NM_123665.5"/>
</dbReference>
<dbReference type="SMR" id="Q9FMM0"/>
<dbReference type="BioGRID" id="19564">
    <property type="interactions" value="7"/>
</dbReference>
<dbReference type="FunCoup" id="Q9FMM0">
    <property type="interactions" value="4059"/>
</dbReference>
<dbReference type="IntAct" id="Q9FMM0">
    <property type="interactions" value="4"/>
</dbReference>
<dbReference type="STRING" id="3702.Q9FMM0"/>
<dbReference type="PaxDb" id="3702-AT5G42990.1"/>
<dbReference type="ProteomicsDB" id="243238"/>
<dbReference type="EnsemblPlants" id="AT5G42990.1">
    <property type="protein sequence ID" value="AT5G42990.1"/>
    <property type="gene ID" value="AT5G42990"/>
</dbReference>
<dbReference type="GeneID" id="834314"/>
<dbReference type="Gramene" id="AT5G42990.1">
    <property type="protein sequence ID" value="AT5G42990.1"/>
    <property type="gene ID" value="AT5G42990"/>
</dbReference>
<dbReference type="KEGG" id="ath:AT5G42990"/>
<dbReference type="Araport" id="AT5G42990"/>
<dbReference type="TAIR" id="AT5G42990">
    <property type="gene designation" value="UBC18"/>
</dbReference>
<dbReference type="eggNOG" id="KOG0427">
    <property type="taxonomic scope" value="Eukaryota"/>
</dbReference>
<dbReference type="HOGENOM" id="CLU_030988_15_1_1"/>
<dbReference type="InParanoid" id="Q9FMM0"/>
<dbReference type="OMA" id="HPICASI"/>
<dbReference type="OrthoDB" id="406833at2759"/>
<dbReference type="PhylomeDB" id="Q9FMM0"/>
<dbReference type="UniPathway" id="UPA00143"/>
<dbReference type="PRO" id="PR:Q9FMM0"/>
<dbReference type="Proteomes" id="UP000006548">
    <property type="component" value="Chromosome 5"/>
</dbReference>
<dbReference type="ExpressionAtlas" id="Q9FMM0">
    <property type="expression patterns" value="baseline and differential"/>
</dbReference>
<dbReference type="GO" id="GO:0005524">
    <property type="term" value="F:ATP binding"/>
    <property type="evidence" value="ECO:0007669"/>
    <property type="project" value="UniProtKB-KW"/>
</dbReference>
<dbReference type="GO" id="GO:0061631">
    <property type="term" value="F:ubiquitin conjugating enzyme activity"/>
    <property type="evidence" value="ECO:0007669"/>
    <property type="project" value="UniProtKB-EC"/>
</dbReference>
<dbReference type="GO" id="GO:0016567">
    <property type="term" value="P:protein ubiquitination"/>
    <property type="evidence" value="ECO:0007669"/>
    <property type="project" value="UniProtKB-UniPathway"/>
</dbReference>
<dbReference type="CDD" id="cd23808">
    <property type="entry name" value="UBCc_UBE2W"/>
    <property type="match status" value="1"/>
</dbReference>
<dbReference type="FunFam" id="3.10.110.10:FF:000032">
    <property type="entry name" value="probable ubiquitin-conjugating enzyme E2 16"/>
    <property type="match status" value="1"/>
</dbReference>
<dbReference type="Gene3D" id="3.10.110.10">
    <property type="entry name" value="Ubiquitin Conjugating Enzyme"/>
    <property type="match status" value="1"/>
</dbReference>
<dbReference type="InterPro" id="IPR050113">
    <property type="entry name" value="Ub_conjugating_enzyme"/>
</dbReference>
<dbReference type="InterPro" id="IPR000608">
    <property type="entry name" value="UBQ-conjugat_E2_core"/>
</dbReference>
<dbReference type="InterPro" id="IPR023313">
    <property type="entry name" value="UBQ-conjugating_AS"/>
</dbReference>
<dbReference type="InterPro" id="IPR016135">
    <property type="entry name" value="UBQ-conjugating_enzyme/RWD"/>
</dbReference>
<dbReference type="PANTHER" id="PTHR24067">
    <property type="entry name" value="UBIQUITIN-CONJUGATING ENZYME E2"/>
    <property type="match status" value="1"/>
</dbReference>
<dbReference type="Pfam" id="PF00179">
    <property type="entry name" value="UQ_con"/>
    <property type="match status" value="1"/>
</dbReference>
<dbReference type="SMART" id="SM00212">
    <property type="entry name" value="UBCc"/>
    <property type="match status" value="1"/>
</dbReference>
<dbReference type="SUPFAM" id="SSF54495">
    <property type="entry name" value="UBC-like"/>
    <property type="match status" value="1"/>
</dbReference>
<dbReference type="PROSITE" id="PS00183">
    <property type="entry name" value="UBC_1"/>
    <property type="match status" value="1"/>
</dbReference>
<dbReference type="PROSITE" id="PS50127">
    <property type="entry name" value="UBC_2"/>
    <property type="match status" value="1"/>
</dbReference>
<accession>Q9FMM0</accession>
<accession>O48954</accession>
<proteinExistence type="evidence at transcript level"/>